<keyword id="KW-0067">ATP-binding</keyword>
<keyword id="KW-0131">Cell cycle</keyword>
<keyword id="KW-0132">Cell division</keyword>
<keyword id="KW-0133">Cell shape</keyword>
<keyword id="KW-0961">Cell wall biogenesis/degradation</keyword>
<keyword id="KW-0963">Cytoplasm</keyword>
<keyword id="KW-0436">Ligase</keyword>
<keyword id="KW-0547">Nucleotide-binding</keyword>
<keyword id="KW-0573">Peptidoglycan synthesis</keyword>
<evidence type="ECO:0000255" key="1">
    <source>
        <dbReference type="HAMAP-Rule" id="MF_00639"/>
    </source>
</evidence>
<gene>
    <name evidence="1" type="primary">murD</name>
    <name type="ordered locus">LCABL_15010</name>
</gene>
<comment type="function">
    <text evidence="1">Cell wall formation. Catalyzes the addition of glutamate to the nucleotide precursor UDP-N-acetylmuramoyl-L-alanine (UMA).</text>
</comment>
<comment type="catalytic activity">
    <reaction evidence="1">
        <text>UDP-N-acetyl-alpha-D-muramoyl-L-alanine + D-glutamate + ATP = UDP-N-acetyl-alpha-D-muramoyl-L-alanyl-D-glutamate + ADP + phosphate + H(+)</text>
        <dbReference type="Rhea" id="RHEA:16429"/>
        <dbReference type="ChEBI" id="CHEBI:15378"/>
        <dbReference type="ChEBI" id="CHEBI:29986"/>
        <dbReference type="ChEBI" id="CHEBI:30616"/>
        <dbReference type="ChEBI" id="CHEBI:43474"/>
        <dbReference type="ChEBI" id="CHEBI:83898"/>
        <dbReference type="ChEBI" id="CHEBI:83900"/>
        <dbReference type="ChEBI" id="CHEBI:456216"/>
        <dbReference type="EC" id="6.3.2.9"/>
    </reaction>
</comment>
<comment type="pathway">
    <text evidence="1">Cell wall biogenesis; peptidoglycan biosynthesis.</text>
</comment>
<comment type="subcellular location">
    <subcellularLocation>
        <location evidence="1">Cytoplasm</location>
    </subcellularLocation>
</comment>
<comment type="similarity">
    <text evidence="1">Belongs to the MurCDEF family.</text>
</comment>
<accession>B3WDY1</accession>
<feature type="chain" id="PRO_1000130860" description="UDP-N-acetylmuramoylalanine--D-glutamate ligase">
    <location>
        <begin position="1"/>
        <end position="459"/>
    </location>
</feature>
<feature type="binding site" evidence="1">
    <location>
        <begin position="119"/>
        <end position="125"/>
    </location>
    <ligand>
        <name>ATP</name>
        <dbReference type="ChEBI" id="CHEBI:30616"/>
    </ligand>
</feature>
<sequence>MKNISDYRNKKVLVLGLAKSGVNAARLLHKLGALVTVNDKQQFDDNKDAQELLADGMRVITGRHPVELLDEHFELMVKNPGIPYSNPMVKRAEALHMPIITEPELAYQVSEAQWIGITGTNGKTTTTTLIGLMLNQQRPHHAFDAGNIGIPVSQVAQKVGKDDTIVAELSSFQLCGIKTLHPHIAVLTNIYEAHLDWHGNRANYVAAKMRITMNQTPDDYFIMNWDLPEMHELAKQSKAQIVPFSRKNAEGARAQLIDGWLTFDGDRIMKASEMQIPGLHNIENALAAIAAVKLEGVGDDAIREVLRTFSGVKHRIQYLETIDGRRVYNDSKATNVEAATVALNAFDQPIVWLAGGLDRGLPMDALTPLVKKHVKSMVVFGQTAPLMAKIGKDAGVPVQTTENVMTAVPLAYEVSRPGDVILLSPAAASWDQYPNFEVRGDDFIKAVNQLKATVESGDK</sequence>
<dbReference type="EC" id="6.3.2.9" evidence="1"/>
<dbReference type="EMBL" id="FM177140">
    <property type="protein sequence ID" value="CAQ66582.1"/>
    <property type="molecule type" value="Genomic_DNA"/>
</dbReference>
<dbReference type="SMR" id="B3WDY1"/>
<dbReference type="KEGG" id="lcb:LCABL_15010"/>
<dbReference type="HOGENOM" id="CLU_032540_0_1_9"/>
<dbReference type="UniPathway" id="UPA00219"/>
<dbReference type="GO" id="GO:0005737">
    <property type="term" value="C:cytoplasm"/>
    <property type="evidence" value="ECO:0007669"/>
    <property type="project" value="UniProtKB-SubCell"/>
</dbReference>
<dbReference type="GO" id="GO:0005524">
    <property type="term" value="F:ATP binding"/>
    <property type="evidence" value="ECO:0007669"/>
    <property type="project" value="UniProtKB-UniRule"/>
</dbReference>
<dbReference type="GO" id="GO:0008764">
    <property type="term" value="F:UDP-N-acetylmuramoylalanine-D-glutamate ligase activity"/>
    <property type="evidence" value="ECO:0007669"/>
    <property type="project" value="UniProtKB-UniRule"/>
</dbReference>
<dbReference type="GO" id="GO:0051301">
    <property type="term" value="P:cell division"/>
    <property type="evidence" value="ECO:0007669"/>
    <property type="project" value="UniProtKB-KW"/>
</dbReference>
<dbReference type="GO" id="GO:0071555">
    <property type="term" value="P:cell wall organization"/>
    <property type="evidence" value="ECO:0007669"/>
    <property type="project" value="UniProtKB-KW"/>
</dbReference>
<dbReference type="GO" id="GO:0009252">
    <property type="term" value="P:peptidoglycan biosynthetic process"/>
    <property type="evidence" value="ECO:0007669"/>
    <property type="project" value="UniProtKB-UniRule"/>
</dbReference>
<dbReference type="GO" id="GO:0008360">
    <property type="term" value="P:regulation of cell shape"/>
    <property type="evidence" value="ECO:0007669"/>
    <property type="project" value="UniProtKB-KW"/>
</dbReference>
<dbReference type="Gene3D" id="3.90.190.20">
    <property type="entry name" value="Mur ligase, C-terminal domain"/>
    <property type="match status" value="1"/>
</dbReference>
<dbReference type="Gene3D" id="3.40.1190.10">
    <property type="entry name" value="Mur-like, catalytic domain"/>
    <property type="match status" value="1"/>
</dbReference>
<dbReference type="Gene3D" id="3.40.50.720">
    <property type="entry name" value="NAD(P)-binding Rossmann-like Domain"/>
    <property type="match status" value="1"/>
</dbReference>
<dbReference type="HAMAP" id="MF_00639">
    <property type="entry name" value="MurD"/>
    <property type="match status" value="1"/>
</dbReference>
<dbReference type="InterPro" id="IPR036565">
    <property type="entry name" value="Mur-like_cat_sf"/>
</dbReference>
<dbReference type="InterPro" id="IPR004101">
    <property type="entry name" value="Mur_ligase_C"/>
</dbReference>
<dbReference type="InterPro" id="IPR036615">
    <property type="entry name" value="Mur_ligase_C_dom_sf"/>
</dbReference>
<dbReference type="InterPro" id="IPR013221">
    <property type="entry name" value="Mur_ligase_cen"/>
</dbReference>
<dbReference type="InterPro" id="IPR005762">
    <property type="entry name" value="MurD"/>
</dbReference>
<dbReference type="NCBIfam" id="TIGR01087">
    <property type="entry name" value="murD"/>
    <property type="match status" value="1"/>
</dbReference>
<dbReference type="PANTHER" id="PTHR43692">
    <property type="entry name" value="UDP-N-ACETYLMURAMOYLALANINE--D-GLUTAMATE LIGASE"/>
    <property type="match status" value="1"/>
</dbReference>
<dbReference type="PANTHER" id="PTHR43692:SF1">
    <property type="entry name" value="UDP-N-ACETYLMURAMOYLALANINE--D-GLUTAMATE LIGASE"/>
    <property type="match status" value="1"/>
</dbReference>
<dbReference type="Pfam" id="PF02875">
    <property type="entry name" value="Mur_ligase_C"/>
    <property type="match status" value="1"/>
</dbReference>
<dbReference type="Pfam" id="PF08245">
    <property type="entry name" value="Mur_ligase_M"/>
    <property type="match status" value="1"/>
</dbReference>
<dbReference type="Pfam" id="PF21799">
    <property type="entry name" value="MurD-like_N"/>
    <property type="match status" value="1"/>
</dbReference>
<dbReference type="SUPFAM" id="SSF51984">
    <property type="entry name" value="MurCD N-terminal domain"/>
    <property type="match status" value="1"/>
</dbReference>
<dbReference type="SUPFAM" id="SSF53623">
    <property type="entry name" value="MurD-like peptide ligases, catalytic domain"/>
    <property type="match status" value="1"/>
</dbReference>
<dbReference type="SUPFAM" id="SSF53244">
    <property type="entry name" value="MurD-like peptide ligases, peptide-binding domain"/>
    <property type="match status" value="1"/>
</dbReference>
<name>MURD_LACCB</name>
<reference key="1">
    <citation type="submission" date="2008-06" db="EMBL/GenBank/DDBJ databases">
        <title>Lactobacillus casei BL23 complete genome sequence.</title>
        <authorList>
            <person name="Maze A."/>
            <person name="Boel G."/>
            <person name="Bourand A."/>
            <person name="Loux V."/>
            <person name="Gibrat J.F."/>
            <person name="Zuniga M."/>
            <person name="Hartke A."/>
            <person name="Deutscher J."/>
        </authorList>
    </citation>
    <scope>NUCLEOTIDE SEQUENCE [LARGE SCALE GENOMIC DNA]</scope>
    <source>
        <strain>BL23</strain>
    </source>
</reference>
<protein>
    <recommendedName>
        <fullName evidence="1">UDP-N-acetylmuramoylalanine--D-glutamate ligase</fullName>
        <ecNumber evidence="1">6.3.2.9</ecNumber>
    </recommendedName>
    <alternativeName>
        <fullName evidence="1">D-glutamic acid-adding enzyme</fullName>
    </alternativeName>
    <alternativeName>
        <fullName evidence="1">UDP-N-acetylmuramoyl-L-alanyl-D-glutamate synthetase</fullName>
    </alternativeName>
</protein>
<organism>
    <name type="scientific">Lacticaseibacillus casei (strain BL23)</name>
    <name type="common">Lactobacillus casei</name>
    <dbReference type="NCBI Taxonomy" id="543734"/>
    <lineage>
        <taxon>Bacteria</taxon>
        <taxon>Bacillati</taxon>
        <taxon>Bacillota</taxon>
        <taxon>Bacilli</taxon>
        <taxon>Lactobacillales</taxon>
        <taxon>Lactobacillaceae</taxon>
        <taxon>Lacticaseibacillus</taxon>
    </lineage>
</organism>
<proteinExistence type="inferred from homology"/>